<sequence length="964" mass="106198">MLWQRLAVVEWAALAWELLGASVLFIAVRWLVRRLEKRPRDLNRCGTLSSPPSASEAVAAQPGEVTMDAMMARLKLLNPDDLRKEVMKAGLKCGPITSTTRFIFEKKLAQALLEQGGLLTSSLPKPSAVTAMAFIQGTSRTPPSVDGKQTQQACFSEDRDFGYSVGLNPPEEEAVASSVHPVPFSASTRNDNHKAGVTAPKEPLVYYGVCPVYEDGPVRHERIHVYEDKKEALQAAKLIKGSRFKAFRTREDAEKFARGICDYLPSPNKTTPLLSPVKAVPLGGSDGLKADGLCLAESETVNKERANSYKNPRTQDLTAKLRKAVENGEEHTFSDLIWSNPRYLIGSGDNPTIVQEGCRYNVMHVAAKENQASMCQLTLETLENPEFMRLMYPDDNMDMLQKRILYVVDLYLNTPDKVGFDTPLHFACKFGNVDVVNVLSSHPLIVKNRKNKYGKTPEEVICERSQNKSPALKERIREYLMGHYYVPLLRAEDTSPVIGELWSSDQKAEASNTAHCRSSPRDPVMTLRAFVGPLSPSKAEDFRKLWKTPPRKKAGFFHSIRKSDPERGIERVGRELAHELGYPWVEYWEFLGCFVDLSSQEGLQRLEEYLIQKELSKKAQQEIRENEGCLQDRTSDFGSGKKYSNSISVGAFLDGDDDSSLEEIKNQQNTVPSQSQPTTDKFQTSKSGSLPLGQKVDPGETSVGTYPDKGRNGFCHPLNHRTADGRGLEATNGEEALPPPVSVLTQELNKLNLQSLGDSLHETPDKNGKLEDEVLPSRKGAADSDLLASPPAIASLGKKQVRTNTEVSEAMAEMSLGPKSPQLGVQAGLEPILSSATVDSTKRLFLSGEEPSKLDRDVLAALECANIDPGLYPAIHRWKSTVMCYSPSDRQSWPSPALKGKFTTELVDLDCSHSCSGRCSPAGSSPSKPGHTSSSSGLHSPGRYSPAHGRHFQRVAHVARLAAL</sequence>
<keyword id="KW-0025">Alternative splicing</keyword>
<keyword id="KW-0040">ANK repeat</keyword>
<keyword id="KW-0131">Cell cycle</keyword>
<keyword id="KW-0132">Cell division</keyword>
<keyword id="KW-0256">Endoplasmic reticulum</keyword>
<keyword id="KW-0472">Membrane</keyword>
<keyword id="KW-0498">Mitosis</keyword>
<keyword id="KW-0597">Phosphoprotein</keyword>
<keyword id="KW-1185">Reference proteome</keyword>
<keyword id="KW-0735">Signal-anchor</keyword>
<keyword id="KW-0812">Transmembrane</keyword>
<keyword id="KW-1133">Transmembrane helix</keyword>
<comment type="function">
    <text evidence="2">Involved in mitotic nuclear envelope reassembly by promoting dephosphorylation of BAF/BANF1 during mitotic exit. Coordinates the control of BAF/BANF1 dephosphorylation by inhibiting VRK1 kinase and promoting dephosphorylation of BAF/BANF1 by protein phosphatase 2A (PP2A), thereby facilitating nuclear envelope assembly. May regulate nuclear localization of VRK1 in non-dividing cells. It is unclear whether it acts as a real PP2A regulatory subunit or whether it is involved in recruitment of the PP2A complex. Involved in brain development.</text>
</comment>
<comment type="subunit">
    <text evidence="1">Interacts with BAF/BANF1. Interacts with protein phosphatase 2A (PP2A) components PPP2C (PPP2CA or PPP2CB) and PPP2R1A (By similarity).</text>
</comment>
<comment type="subcellular location">
    <subcellularLocation>
        <location evidence="1">Endoplasmic reticulum membrane</location>
        <topology evidence="1">Single-pass type III membrane protein</topology>
    </subcellularLocation>
</comment>
<comment type="alternative products">
    <event type="alternative splicing"/>
    <isoform>
        <id>Q6P1H6-1</id>
        <name>1</name>
        <sequence type="displayed"/>
    </isoform>
    <isoform>
        <id>Q6P1H6-2</id>
        <name>2</name>
        <sequence type="described" ref="VSP_023576"/>
    </isoform>
    <isoform>
        <id>Q6P1H6-3</id>
        <name>3</name>
        <sequence type="described" ref="VSP_023579"/>
    </isoform>
    <isoform>
        <id>Q6P1H6-4</id>
        <name>4</name>
        <sequence type="described" ref="VSP_023577 VSP_023578"/>
    </isoform>
</comment>
<comment type="similarity">
    <text evidence="8">Belongs to the ANKLE2 family.</text>
</comment>
<evidence type="ECO:0000250" key="1"/>
<evidence type="ECO:0000250" key="2">
    <source>
        <dbReference type="UniProtKB" id="Q86XL3"/>
    </source>
</evidence>
<evidence type="ECO:0000255" key="3"/>
<evidence type="ECO:0000255" key="4">
    <source>
        <dbReference type="PROSITE-ProRule" id="PRU00313"/>
    </source>
</evidence>
<evidence type="ECO:0000256" key="5">
    <source>
        <dbReference type="SAM" id="MobiDB-lite"/>
    </source>
</evidence>
<evidence type="ECO:0000303" key="6">
    <source>
    </source>
</evidence>
<evidence type="ECO:0000303" key="7">
    <source>
    </source>
</evidence>
<evidence type="ECO:0000305" key="8"/>
<evidence type="ECO:0007744" key="9">
    <source>
    </source>
</evidence>
<reference key="1">
    <citation type="journal article" date="2005" name="Science">
        <title>The transcriptional landscape of the mammalian genome.</title>
        <authorList>
            <person name="Carninci P."/>
            <person name="Kasukawa T."/>
            <person name="Katayama S."/>
            <person name="Gough J."/>
            <person name="Frith M.C."/>
            <person name="Maeda N."/>
            <person name="Oyama R."/>
            <person name="Ravasi T."/>
            <person name="Lenhard B."/>
            <person name="Wells C."/>
            <person name="Kodzius R."/>
            <person name="Shimokawa K."/>
            <person name="Bajic V.B."/>
            <person name="Brenner S.E."/>
            <person name="Batalov S."/>
            <person name="Forrest A.R."/>
            <person name="Zavolan M."/>
            <person name="Davis M.J."/>
            <person name="Wilming L.G."/>
            <person name="Aidinis V."/>
            <person name="Allen J.E."/>
            <person name="Ambesi-Impiombato A."/>
            <person name="Apweiler R."/>
            <person name="Aturaliya R.N."/>
            <person name="Bailey T.L."/>
            <person name="Bansal M."/>
            <person name="Baxter L."/>
            <person name="Beisel K.W."/>
            <person name="Bersano T."/>
            <person name="Bono H."/>
            <person name="Chalk A.M."/>
            <person name="Chiu K.P."/>
            <person name="Choudhary V."/>
            <person name="Christoffels A."/>
            <person name="Clutterbuck D.R."/>
            <person name="Crowe M.L."/>
            <person name="Dalla E."/>
            <person name="Dalrymple B.P."/>
            <person name="de Bono B."/>
            <person name="Della Gatta G."/>
            <person name="di Bernardo D."/>
            <person name="Down T."/>
            <person name="Engstrom P."/>
            <person name="Fagiolini M."/>
            <person name="Faulkner G."/>
            <person name="Fletcher C.F."/>
            <person name="Fukushima T."/>
            <person name="Furuno M."/>
            <person name="Futaki S."/>
            <person name="Gariboldi M."/>
            <person name="Georgii-Hemming P."/>
            <person name="Gingeras T.R."/>
            <person name="Gojobori T."/>
            <person name="Green R.E."/>
            <person name="Gustincich S."/>
            <person name="Harbers M."/>
            <person name="Hayashi Y."/>
            <person name="Hensch T.K."/>
            <person name="Hirokawa N."/>
            <person name="Hill D."/>
            <person name="Huminiecki L."/>
            <person name="Iacono M."/>
            <person name="Ikeo K."/>
            <person name="Iwama A."/>
            <person name="Ishikawa T."/>
            <person name="Jakt M."/>
            <person name="Kanapin A."/>
            <person name="Katoh M."/>
            <person name="Kawasawa Y."/>
            <person name="Kelso J."/>
            <person name="Kitamura H."/>
            <person name="Kitano H."/>
            <person name="Kollias G."/>
            <person name="Krishnan S.P."/>
            <person name="Kruger A."/>
            <person name="Kummerfeld S.K."/>
            <person name="Kurochkin I.V."/>
            <person name="Lareau L.F."/>
            <person name="Lazarevic D."/>
            <person name="Lipovich L."/>
            <person name="Liu J."/>
            <person name="Liuni S."/>
            <person name="McWilliam S."/>
            <person name="Madan Babu M."/>
            <person name="Madera M."/>
            <person name="Marchionni L."/>
            <person name="Matsuda H."/>
            <person name="Matsuzawa S."/>
            <person name="Miki H."/>
            <person name="Mignone F."/>
            <person name="Miyake S."/>
            <person name="Morris K."/>
            <person name="Mottagui-Tabar S."/>
            <person name="Mulder N."/>
            <person name="Nakano N."/>
            <person name="Nakauchi H."/>
            <person name="Ng P."/>
            <person name="Nilsson R."/>
            <person name="Nishiguchi S."/>
            <person name="Nishikawa S."/>
            <person name="Nori F."/>
            <person name="Ohara O."/>
            <person name="Okazaki Y."/>
            <person name="Orlando V."/>
            <person name="Pang K.C."/>
            <person name="Pavan W.J."/>
            <person name="Pavesi G."/>
            <person name="Pesole G."/>
            <person name="Petrovsky N."/>
            <person name="Piazza S."/>
            <person name="Reed J."/>
            <person name="Reid J.F."/>
            <person name="Ring B.Z."/>
            <person name="Ringwald M."/>
            <person name="Rost B."/>
            <person name="Ruan Y."/>
            <person name="Salzberg S.L."/>
            <person name="Sandelin A."/>
            <person name="Schneider C."/>
            <person name="Schoenbach C."/>
            <person name="Sekiguchi K."/>
            <person name="Semple C.A."/>
            <person name="Seno S."/>
            <person name="Sessa L."/>
            <person name="Sheng Y."/>
            <person name="Shibata Y."/>
            <person name="Shimada H."/>
            <person name="Shimada K."/>
            <person name="Silva D."/>
            <person name="Sinclair B."/>
            <person name="Sperling S."/>
            <person name="Stupka E."/>
            <person name="Sugiura K."/>
            <person name="Sultana R."/>
            <person name="Takenaka Y."/>
            <person name="Taki K."/>
            <person name="Tammoja K."/>
            <person name="Tan S.L."/>
            <person name="Tang S."/>
            <person name="Taylor M.S."/>
            <person name="Tegner J."/>
            <person name="Teichmann S.A."/>
            <person name="Ueda H.R."/>
            <person name="van Nimwegen E."/>
            <person name="Verardo R."/>
            <person name="Wei C.L."/>
            <person name="Yagi K."/>
            <person name="Yamanishi H."/>
            <person name="Zabarovsky E."/>
            <person name="Zhu S."/>
            <person name="Zimmer A."/>
            <person name="Hide W."/>
            <person name="Bult C."/>
            <person name="Grimmond S.M."/>
            <person name="Teasdale R.D."/>
            <person name="Liu E.T."/>
            <person name="Brusic V."/>
            <person name="Quackenbush J."/>
            <person name="Wahlestedt C."/>
            <person name="Mattick J.S."/>
            <person name="Hume D.A."/>
            <person name="Kai C."/>
            <person name="Sasaki D."/>
            <person name="Tomaru Y."/>
            <person name="Fukuda S."/>
            <person name="Kanamori-Katayama M."/>
            <person name="Suzuki M."/>
            <person name="Aoki J."/>
            <person name="Arakawa T."/>
            <person name="Iida J."/>
            <person name="Imamura K."/>
            <person name="Itoh M."/>
            <person name="Kato T."/>
            <person name="Kawaji H."/>
            <person name="Kawagashira N."/>
            <person name="Kawashima T."/>
            <person name="Kojima M."/>
            <person name="Kondo S."/>
            <person name="Konno H."/>
            <person name="Nakano K."/>
            <person name="Ninomiya N."/>
            <person name="Nishio T."/>
            <person name="Okada M."/>
            <person name="Plessy C."/>
            <person name="Shibata K."/>
            <person name="Shiraki T."/>
            <person name="Suzuki S."/>
            <person name="Tagami M."/>
            <person name="Waki K."/>
            <person name="Watahiki A."/>
            <person name="Okamura-Oho Y."/>
            <person name="Suzuki H."/>
            <person name="Kawai J."/>
            <person name="Hayashizaki Y."/>
        </authorList>
    </citation>
    <scope>NUCLEOTIDE SEQUENCE [LARGE SCALE MRNA] (ISOFORMS 2 AND 4)</scope>
    <source>
        <strain>C57BL/6J</strain>
        <tissue>Brain cortex</tissue>
        <tissue>Head</tissue>
        <tissue>Olfactory bulb</tissue>
        <tissue>Stomach</tissue>
    </source>
</reference>
<reference key="2">
    <citation type="journal article" date="2004" name="Genome Res.">
        <title>The status, quality, and expansion of the NIH full-length cDNA project: the Mammalian Gene Collection (MGC).</title>
        <authorList>
            <consortium name="The MGC Project Team"/>
        </authorList>
    </citation>
    <scope>NUCLEOTIDE SEQUENCE [LARGE SCALE MRNA] (ISOFORM 1)</scope>
    <source>
        <strain>C57BL/6J</strain>
        <tissue>Brain</tissue>
    </source>
</reference>
<reference key="3">
    <citation type="journal article" date="2003" name="DNA Res.">
        <title>Prediction of the coding sequences of mouse homologues of KIAA gene: III. The complete nucleotide sequences of 500 mouse KIAA-homologous cDNAs identified by screening of terminal sequences of cDNA clones randomly sampled from size-fractionated libraries.</title>
        <authorList>
            <person name="Okazaki N."/>
            <person name="Kikuno R."/>
            <person name="Ohara R."/>
            <person name="Inamoto S."/>
            <person name="Koseki H."/>
            <person name="Hiraoka S."/>
            <person name="Saga Y."/>
            <person name="Nagase T."/>
            <person name="Ohara O."/>
            <person name="Koga H."/>
        </authorList>
    </citation>
    <scope>NUCLEOTIDE SEQUENCE [LARGE SCALE MRNA] OF 160-964 (ISOFORM 3)</scope>
    <source>
        <tissue>Embryonic tail</tissue>
    </source>
</reference>
<reference key="4">
    <citation type="journal article" date="2010" name="Cell">
        <title>A tissue-specific atlas of mouse protein phosphorylation and expression.</title>
        <authorList>
            <person name="Huttlin E.L."/>
            <person name="Jedrychowski M.P."/>
            <person name="Elias J.E."/>
            <person name="Goswami T."/>
            <person name="Rad R."/>
            <person name="Beausoleil S.A."/>
            <person name="Villen J."/>
            <person name="Haas W."/>
            <person name="Sowa M.E."/>
            <person name="Gygi S.P."/>
        </authorList>
    </citation>
    <scope>PHOSPHORYLATION [LARGE SCALE ANALYSIS] AT SER-266 AND SER-275</scope>
    <scope>IDENTIFICATION BY MASS SPECTROMETRY [LARGE SCALE ANALYSIS]</scope>
    <source>
        <tissue>Brain</tissue>
        <tissue>Heart</tissue>
        <tissue>Lung</tissue>
        <tissue>Spleen</tissue>
        <tissue>Testis</tissue>
    </source>
</reference>
<proteinExistence type="evidence at protein level"/>
<name>ANKL2_MOUSE</name>
<protein>
    <recommendedName>
        <fullName>Ankyrin repeat and LEM domain-containing protein 2</fullName>
    </recommendedName>
    <alternativeName>
        <fullName>LEM domain-containing protein 4</fullName>
    </alternativeName>
</protein>
<feature type="chain" id="PRO_0000280243" description="Ankyrin repeat and LEM domain-containing protein 2">
    <location>
        <begin position="1"/>
        <end position="964"/>
    </location>
</feature>
<feature type="topological domain" description="Extracellular" evidence="3">
    <location>
        <begin position="1"/>
        <end position="7"/>
    </location>
</feature>
<feature type="transmembrane region" description="Helical; Signal-anchor for type III membrane protein" evidence="3">
    <location>
        <begin position="8"/>
        <end position="28"/>
    </location>
</feature>
<feature type="topological domain" description="Cytoplasmic" evidence="3">
    <location>
        <begin position="29"/>
        <end position="964"/>
    </location>
</feature>
<feature type="domain" description="LEM" evidence="4">
    <location>
        <begin position="71"/>
        <end position="115"/>
    </location>
</feature>
<feature type="repeat" description="ANK">
    <location>
        <begin position="419"/>
        <end position="448"/>
    </location>
</feature>
<feature type="region of interest" description="Disordered" evidence="5">
    <location>
        <begin position="666"/>
        <end position="726"/>
    </location>
</feature>
<feature type="region of interest" description="Disordered" evidence="5">
    <location>
        <begin position="920"/>
        <end position="949"/>
    </location>
</feature>
<feature type="compositionally biased region" description="Polar residues" evidence="5">
    <location>
        <begin position="666"/>
        <end position="688"/>
    </location>
</feature>
<feature type="compositionally biased region" description="Low complexity" evidence="5">
    <location>
        <begin position="923"/>
        <end position="937"/>
    </location>
</feature>
<feature type="modified residue" description="Phosphoserine" evidence="9">
    <location>
        <position position="266"/>
    </location>
</feature>
<feature type="modified residue" description="Phosphoserine" evidence="9">
    <location>
        <position position="275"/>
    </location>
</feature>
<feature type="modified residue" description="Phosphoserine" evidence="2">
    <location>
        <position position="503"/>
    </location>
</feature>
<feature type="modified residue" description="Phosphoserine" evidence="2">
    <location>
        <position position="519"/>
    </location>
</feature>
<feature type="modified residue" description="Phosphoserine" evidence="2">
    <location>
        <position position="535"/>
    </location>
</feature>
<feature type="modified residue" description="Phosphoserine" evidence="2">
    <location>
        <position position="675"/>
    </location>
</feature>
<feature type="modified residue" description="Phosphoserine" evidence="2">
    <location>
        <position position="916"/>
    </location>
</feature>
<feature type="modified residue" description="Phosphoserine" evidence="2">
    <location>
        <position position="940"/>
    </location>
</feature>
<feature type="splice variant" id="VSP_023576" description="In isoform 2." evidence="7">
    <location>
        <position position="290"/>
    </location>
</feature>
<feature type="splice variant" id="VSP_023577" description="In isoform 4." evidence="7">
    <original>GFDTP</original>
    <variation>VSTPH</variation>
    <location>
        <begin position="419"/>
        <end position="423"/>
    </location>
</feature>
<feature type="splice variant" id="VSP_023578" description="In isoform 4." evidence="7">
    <location>
        <begin position="424"/>
        <end position="964"/>
    </location>
</feature>
<feature type="splice variant" id="VSP_023579" description="In isoform 3." evidence="6">
    <location>
        <begin position="667"/>
        <end position="744"/>
    </location>
</feature>
<feature type="sequence conflict" description="In Ref. 1; BAE21022." evidence="8" ref="1">
    <original>L</original>
    <variation>H</variation>
    <location>
        <position position="82"/>
    </location>
</feature>
<feature type="sequence conflict" description="In Ref. 1; BAE22361." evidence="8" ref="1">
    <original>L</original>
    <variation>R</variation>
    <location>
        <position position="871"/>
    </location>
</feature>
<organism>
    <name type="scientific">Mus musculus</name>
    <name type="common">Mouse</name>
    <dbReference type="NCBI Taxonomy" id="10090"/>
    <lineage>
        <taxon>Eukaryota</taxon>
        <taxon>Metazoa</taxon>
        <taxon>Chordata</taxon>
        <taxon>Craniata</taxon>
        <taxon>Vertebrata</taxon>
        <taxon>Euteleostomi</taxon>
        <taxon>Mammalia</taxon>
        <taxon>Eutheria</taxon>
        <taxon>Euarchontoglires</taxon>
        <taxon>Glires</taxon>
        <taxon>Rodentia</taxon>
        <taxon>Myomorpha</taxon>
        <taxon>Muroidea</taxon>
        <taxon>Muridae</taxon>
        <taxon>Murinae</taxon>
        <taxon>Mus</taxon>
        <taxon>Mus</taxon>
    </lineage>
</organism>
<accession>Q6P1H6</accession>
<accession>Q3UQF6</accession>
<accession>Q3UY52</accession>
<accession>Q3V1X7</accession>
<accession>Q6ZQ67</accession>
<accession>Q8BRM7</accession>
<accession>Q9CTK6</accession>
<gene>
    <name type="primary">Ankle2</name>
    <name type="synonym">D5Ertd585e</name>
    <name type="synonym">Kiaa0692</name>
    <name type="synonym">Lem4</name>
</gene>
<dbReference type="EMBL" id="AK003234">
    <property type="protein sequence ID" value="BAB22659.1"/>
    <property type="molecule type" value="mRNA"/>
</dbReference>
<dbReference type="EMBL" id="AK132187">
    <property type="protein sequence ID" value="BAE21022.1"/>
    <property type="molecule type" value="mRNA"/>
</dbReference>
<dbReference type="EMBL" id="AK043925">
    <property type="protein sequence ID" value="BAC31703.1"/>
    <property type="molecule type" value="mRNA"/>
</dbReference>
<dbReference type="EMBL" id="AK134966">
    <property type="protein sequence ID" value="BAE22361.1"/>
    <property type="molecule type" value="mRNA"/>
</dbReference>
<dbReference type="EMBL" id="AK142497">
    <property type="protein sequence ID" value="BAE25086.1"/>
    <property type="molecule type" value="mRNA"/>
</dbReference>
<dbReference type="EMBL" id="BC065071">
    <property type="protein sequence ID" value="AAH65071.1"/>
    <property type="molecule type" value="mRNA"/>
</dbReference>
<dbReference type="EMBL" id="AK129192">
    <property type="protein sequence ID" value="BAC98002.1"/>
    <property type="molecule type" value="Transcribed_RNA"/>
</dbReference>
<dbReference type="CCDS" id="CCDS57372.1">
    <molecule id="Q6P1H6-1"/>
</dbReference>
<dbReference type="CCDS" id="CCDS80360.1">
    <molecule id="Q6P1H6-2"/>
</dbReference>
<dbReference type="RefSeq" id="NP_001240743.1">
    <molecule id="Q6P1H6-1"/>
    <property type="nucleotide sequence ID" value="NM_001253814.1"/>
</dbReference>
<dbReference type="RefSeq" id="NP_082198.1">
    <molecule id="Q6P1H6-2"/>
    <property type="nucleotide sequence ID" value="NM_027922.2"/>
</dbReference>
<dbReference type="SMR" id="Q6P1H6"/>
<dbReference type="BioGRID" id="214925">
    <property type="interactions" value="5"/>
</dbReference>
<dbReference type="FunCoup" id="Q6P1H6">
    <property type="interactions" value="4328"/>
</dbReference>
<dbReference type="STRING" id="10090.ENSMUSP00000143044"/>
<dbReference type="GlyGen" id="Q6P1H6">
    <property type="glycosylation" value="1 site, 1 O-linked glycan (1 site)"/>
</dbReference>
<dbReference type="iPTMnet" id="Q6P1H6"/>
<dbReference type="PhosphoSitePlus" id="Q6P1H6"/>
<dbReference type="SwissPalm" id="Q6P1H6"/>
<dbReference type="PaxDb" id="10090-ENSMUSP00000031474"/>
<dbReference type="PeptideAtlas" id="Q6P1H6"/>
<dbReference type="ProteomicsDB" id="296039">
    <molecule id="Q6P1H6-1"/>
</dbReference>
<dbReference type="ProteomicsDB" id="296040">
    <molecule id="Q6P1H6-2"/>
</dbReference>
<dbReference type="ProteomicsDB" id="296041">
    <molecule id="Q6P1H6-3"/>
</dbReference>
<dbReference type="ProteomicsDB" id="296042">
    <molecule id="Q6P1H6-4"/>
</dbReference>
<dbReference type="Pumba" id="Q6P1H6"/>
<dbReference type="Antibodypedia" id="1225">
    <property type="antibodies" value="104 antibodies from 25 providers"/>
</dbReference>
<dbReference type="DNASU" id="71782"/>
<dbReference type="Ensembl" id="ENSMUST00000031474.11">
    <molecule id="Q6P1H6-2"/>
    <property type="protein sequence ID" value="ENSMUSP00000031474.9"/>
    <property type="gene ID" value="ENSMUSG00000029501.16"/>
</dbReference>
<dbReference type="Ensembl" id="ENSMUST00000197188.5">
    <molecule id="Q6P1H6-1"/>
    <property type="protein sequence ID" value="ENSMUSP00000143044.2"/>
    <property type="gene ID" value="ENSMUSG00000029501.16"/>
</dbReference>
<dbReference type="GeneID" id="71782"/>
<dbReference type="KEGG" id="mmu:71782"/>
<dbReference type="UCSC" id="uc008yqe.2">
    <molecule id="Q6P1H6-4"/>
    <property type="organism name" value="mouse"/>
</dbReference>
<dbReference type="UCSC" id="uc008yqf.2">
    <molecule id="Q6P1H6-2"/>
    <property type="organism name" value="mouse"/>
</dbReference>
<dbReference type="UCSC" id="uc008yqg.2">
    <molecule id="Q6P1H6-1"/>
    <property type="organism name" value="mouse"/>
</dbReference>
<dbReference type="AGR" id="MGI:1261856"/>
<dbReference type="CTD" id="23141"/>
<dbReference type="MGI" id="MGI:1261856">
    <property type="gene designation" value="Ankle2"/>
</dbReference>
<dbReference type="VEuPathDB" id="HostDB:ENSMUSG00000029501"/>
<dbReference type="eggNOG" id="ENOG502QQ4Z">
    <property type="taxonomic scope" value="Eukaryota"/>
</dbReference>
<dbReference type="GeneTree" id="ENSGT00390000016767"/>
<dbReference type="HOGENOM" id="CLU_017564_0_0_1"/>
<dbReference type="InParanoid" id="Q6P1H6"/>
<dbReference type="OMA" id="YPPEPCL"/>
<dbReference type="OrthoDB" id="7446186at2759"/>
<dbReference type="PhylomeDB" id="Q6P1H6"/>
<dbReference type="TreeFam" id="TF317729"/>
<dbReference type="Reactome" id="R-MMU-2995383">
    <property type="pathway name" value="Initiation of Nuclear Envelope (NE) Reformation"/>
</dbReference>
<dbReference type="Reactome" id="R-MMU-9013404">
    <property type="pathway name" value="RAC2 GTPase cycle"/>
</dbReference>
<dbReference type="Reactome" id="R-MMU-9013408">
    <property type="pathway name" value="RHOG GTPase cycle"/>
</dbReference>
<dbReference type="BioGRID-ORCS" id="71782">
    <property type="hits" value="21 hits in 83 CRISPR screens"/>
</dbReference>
<dbReference type="ChiTaRS" id="Ankle2">
    <property type="organism name" value="mouse"/>
</dbReference>
<dbReference type="PRO" id="PR:Q6P1H6"/>
<dbReference type="Proteomes" id="UP000000589">
    <property type="component" value="Chromosome 5"/>
</dbReference>
<dbReference type="RNAct" id="Q6P1H6">
    <property type="molecule type" value="protein"/>
</dbReference>
<dbReference type="Bgee" id="ENSMUSG00000029501">
    <property type="expression patterns" value="Expressed in spermatocyte and 227 other cell types or tissues"/>
</dbReference>
<dbReference type="GO" id="GO:0005789">
    <property type="term" value="C:endoplasmic reticulum membrane"/>
    <property type="evidence" value="ECO:0000250"/>
    <property type="project" value="UniProtKB"/>
</dbReference>
<dbReference type="GO" id="GO:0004860">
    <property type="term" value="F:protein kinase inhibitor activity"/>
    <property type="evidence" value="ECO:0000250"/>
    <property type="project" value="UniProtKB"/>
</dbReference>
<dbReference type="GO" id="GO:0051721">
    <property type="term" value="F:protein phosphatase 2A binding"/>
    <property type="evidence" value="ECO:0000250"/>
    <property type="project" value="UniProtKB"/>
</dbReference>
<dbReference type="GO" id="GO:0051301">
    <property type="term" value="P:cell division"/>
    <property type="evidence" value="ECO:0007669"/>
    <property type="project" value="UniProtKB-KW"/>
</dbReference>
<dbReference type="GO" id="GO:0007417">
    <property type="term" value="P:central nervous system development"/>
    <property type="evidence" value="ECO:0000250"/>
    <property type="project" value="UniProtKB"/>
</dbReference>
<dbReference type="GO" id="GO:0007084">
    <property type="term" value="P:mitotic nuclear membrane reassembly"/>
    <property type="evidence" value="ECO:0000250"/>
    <property type="project" value="UniProtKB"/>
</dbReference>
<dbReference type="GO" id="GO:0043066">
    <property type="term" value="P:negative regulation of apoptotic process"/>
    <property type="evidence" value="ECO:0000250"/>
    <property type="project" value="UniProtKB"/>
</dbReference>
<dbReference type="GO" id="GO:0042326">
    <property type="term" value="P:negative regulation of phosphorylation"/>
    <property type="evidence" value="ECO:0000250"/>
    <property type="project" value="UniProtKB"/>
</dbReference>
<dbReference type="CDD" id="cd12944">
    <property type="entry name" value="LEM_ANKL2"/>
    <property type="match status" value="1"/>
</dbReference>
<dbReference type="FunFam" id="1.25.40.20:FF:000072">
    <property type="entry name" value="Ankyrin repeat and LEM domain containing 2"/>
    <property type="match status" value="1"/>
</dbReference>
<dbReference type="FunFam" id="1.10.720.40:FF:000001">
    <property type="entry name" value="LEM domain containing 2, isoform CRA_a"/>
    <property type="match status" value="1"/>
</dbReference>
<dbReference type="Gene3D" id="1.10.720.40">
    <property type="match status" value="1"/>
</dbReference>
<dbReference type="Gene3D" id="1.25.40.20">
    <property type="entry name" value="Ankyrin repeat-containing domain"/>
    <property type="match status" value="1"/>
</dbReference>
<dbReference type="InterPro" id="IPR056237">
    <property type="entry name" value="ANKLE2_3rd"/>
</dbReference>
<dbReference type="InterPro" id="IPR002110">
    <property type="entry name" value="Ankyrin_rpt"/>
</dbReference>
<dbReference type="InterPro" id="IPR036770">
    <property type="entry name" value="Ankyrin_rpt-contain_sf"/>
</dbReference>
<dbReference type="InterPro" id="IPR011015">
    <property type="entry name" value="LEM/LEM-like_dom_sf"/>
</dbReference>
<dbReference type="InterPro" id="IPR035006">
    <property type="entry name" value="LEM_ANKL2"/>
</dbReference>
<dbReference type="InterPro" id="IPR003887">
    <property type="entry name" value="LEM_dom"/>
</dbReference>
<dbReference type="PANTHER" id="PTHR12349">
    <property type="entry name" value="ANKYRIN REPEAT AND LEM DOMAIN-CONTAINING PROTEIN 2"/>
    <property type="match status" value="1"/>
</dbReference>
<dbReference type="PANTHER" id="PTHR12349:SF4">
    <property type="entry name" value="ANKYRIN REPEAT AND LEM DOMAIN-CONTAINING PROTEIN 2"/>
    <property type="match status" value="1"/>
</dbReference>
<dbReference type="Pfam" id="PF00023">
    <property type="entry name" value="Ank"/>
    <property type="match status" value="1"/>
</dbReference>
<dbReference type="Pfam" id="PF24567">
    <property type="entry name" value="ANKLE2_3rd"/>
    <property type="match status" value="1"/>
</dbReference>
<dbReference type="Pfam" id="PF03020">
    <property type="entry name" value="LEM"/>
    <property type="match status" value="1"/>
</dbReference>
<dbReference type="SUPFAM" id="SSF48403">
    <property type="entry name" value="Ankyrin repeat"/>
    <property type="match status" value="1"/>
</dbReference>
<dbReference type="SUPFAM" id="SSF63451">
    <property type="entry name" value="LEM domain"/>
    <property type="match status" value="1"/>
</dbReference>
<dbReference type="PROSITE" id="PS50954">
    <property type="entry name" value="LEM"/>
    <property type="match status" value="1"/>
</dbReference>